<reference key="1">
    <citation type="journal article" date="1998" name="Int. J. Syst. Bacteriol.">
        <title>Classification of new phytoplasmas associated with diseases of strawberry in Florida, based on analysis of 16S rRNA and ribosomal protein gene operon sequences.</title>
        <authorList>
            <person name="Jomantiene R."/>
            <person name="Davis R.E."/>
            <person name="Maas J."/>
            <person name="Dally E.L."/>
        </authorList>
    </citation>
    <scope>NUCLEOTIDE SEQUENCE [GENOMIC DNA]</scope>
</reference>
<protein>
    <recommendedName>
        <fullName evidence="3">Small ribosomal subunit protein uS19</fullName>
    </recommendedName>
    <alternativeName>
        <fullName>30S ribosomal protein S19</fullName>
    </alternativeName>
</protein>
<name>RS19_PHYS2</name>
<comment type="function">
    <text evidence="1">Protein S19 forms a complex with S13 that binds strongly to the 16S ribosomal RNA.</text>
</comment>
<comment type="similarity">
    <text evidence="3">Belongs to the universal ribosomal protein uS19 family.</text>
</comment>
<feature type="chain" id="PRO_0000129875" description="Small ribosomal subunit protein uS19">
    <location>
        <begin position="1" status="less than"/>
        <end position="24"/>
    </location>
</feature>
<feature type="region of interest" description="Disordered" evidence="2">
    <location>
        <begin position="1"/>
        <end position="24"/>
    </location>
</feature>
<feature type="compositionally biased region" description="Basic residues" evidence="2">
    <location>
        <begin position="11"/>
        <end position="24"/>
    </location>
</feature>
<feature type="non-terminal residue">
    <location>
        <position position="1"/>
    </location>
</feature>
<keyword id="KW-0687">Ribonucleoprotein</keyword>
<keyword id="KW-0689">Ribosomal protein</keyword>
<keyword id="KW-0694">RNA-binding</keyword>
<keyword id="KW-0699">rRNA-binding</keyword>
<proteinExistence type="inferred from homology"/>
<organism>
    <name type="scientific">Phytoplasma sp. (strain STRAWB2)</name>
    <dbReference type="NCBI Taxonomy" id="59890"/>
    <lineage>
        <taxon>Bacteria</taxon>
        <taxon>Bacillati</taxon>
        <taxon>Mycoplasmatota</taxon>
        <taxon>Mollicutes</taxon>
        <taxon>Acholeplasmatales</taxon>
        <taxon>Acholeplasmataceae</taxon>
        <taxon>Candidatus Phytoplasma</taxon>
    </lineage>
</organism>
<sequence>KLGEFSPTRTYRGHNKKDKKMQKK</sequence>
<dbReference type="EMBL" id="U96617">
    <property type="protein sequence ID" value="AAC13667.1"/>
    <property type="molecule type" value="Genomic_DNA"/>
</dbReference>
<dbReference type="GO" id="GO:1990904">
    <property type="term" value="C:ribonucleoprotein complex"/>
    <property type="evidence" value="ECO:0007669"/>
    <property type="project" value="UniProtKB-KW"/>
</dbReference>
<dbReference type="GO" id="GO:0005840">
    <property type="term" value="C:ribosome"/>
    <property type="evidence" value="ECO:0007669"/>
    <property type="project" value="UniProtKB-KW"/>
</dbReference>
<dbReference type="GO" id="GO:0019843">
    <property type="term" value="F:rRNA binding"/>
    <property type="evidence" value="ECO:0007669"/>
    <property type="project" value="UniProtKB-KW"/>
</dbReference>
<dbReference type="GO" id="GO:0003735">
    <property type="term" value="F:structural constituent of ribosome"/>
    <property type="evidence" value="ECO:0007669"/>
    <property type="project" value="InterPro"/>
</dbReference>
<dbReference type="GO" id="GO:0006412">
    <property type="term" value="P:translation"/>
    <property type="evidence" value="ECO:0007669"/>
    <property type="project" value="InterPro"/>
</dbReference>
<dbReference type="Gene3D" id="3.30.860.10">
    <property type="entry name" value="30s Ribosomal Protein S19, Chain A"/>
    <property type="match status" value="1"/>
</dbReference>
<dbReference type="InterPro" id="IPR023575">
    <property type="entry name" value="Ribosomal_uS19_SF"/>
</dbReference>
<accession>O66096</accession>
<evidence type="ECO:0000250" key="1"/>
<evidence type="ECO:0000256" key="2">
    <source>
        <dbReference type="SAM" id="MobiDB-lite"/>
    </source>
</evidence>
<evidence type="ECO:0000305" key="3"/>